<name>MURC_MYCUA</name>
<reference key="1">
    <citation type="journal article" date="2007" name="Genome Res.">
        <title>Reductive evolution and niche adaptation inferred from the genome of Mycobacterium ulcerans, the causative agent of Buruli ulcer.</title>
        <authorList>
            <person name="Stinear T.P."/>
            <person name="Seemann T."/>
            <person name="Pidot S."/>
            <person name="Frigui W."/>
            <person name="Reysset G."/>
            <person name="Garnier T."/>
            <person name="Meurice G."/>
            <person name="Simon D."/>
            <person name="Bouchier C."/>
            <person name="Ma L."/>
            <person name="Tichit M."/>
            <person name="Porter J.L."/>
            <person name="Ryan J."/>
            <person name="Johnson P.D.R."/>
            <person name="Davies J.K."/>
            <person name="Jenkin G.A."/>
            <person name="Small P.L.C."/>
            <person name="Jones L.M."/>
            <person name="Tekaia F."/>
            <person name="Laval F."/>
            <person name="Daffe M."/>
            <person name="Parkhill J."/>
            <person name="Cole S.T."/>
        </authorList>
    </citation>
    <scope>NUCLEOTIDE SEQUENCE [LARGE SCALE GENOMIC DNA]</scope>
    <source>
        <strain>Agy99</strain>
    </source>
</reference>
<dbReference type="EC" id="6.3.2.8" evidence="1"/>
<dbReference type="EMBL" id="CP000325">
    <property type="protein sequence ID" value="ABL05655.1"/>
    <property type="molecule type" value="Genomic_DNA"/>
</dbReference>
<dbReference type="RefSeq" id="WP_011741261.1">
    <property type="nucleotide sequence ID" value="NC_008611.1"/>
</dbReference>
<dbReference type="SMR" id="A0PTI6"/>
<dbReference type="KEGG" id="mul:MUL_3500"/>
<dbReference type="eggNOG" id="COG0773">
    <property type="taxonomic scope" value="Bacteria"/>
</dbReference>
<dbReference type="HOGENOM" id="CLU_028104_2_2_11"/>
<dbReference type="UniPathway" id="UPA00219"/>
<dbReference type="Proteomes" id="UP000000765">
    <property type="component" value="Chromosome"/>
</dbReference>
<dbReference type="GO" id="GO:0005737">
    <property type="term" value="C:cytoplasm"/>
    <property type="evidence" value="ECO:0007669"/>
    <property type="project" value="UniProtKB-SubCell"/>
</dbReference>
<dbReference type="GO" id="GO:0005524">
    <property type="term" value="F:ATP binding"/>
    <property type="evidence" value="ECO:0007669"/>
    <property type="project" value="UniProtKB-UniRule"/>
</dbReference>
<dbReference type="GO" id="GO:0008763">
    <property type="term" value="F:UDP-N-acetylmuramate-L-alanine ligase activity"/>
    <property type="evidence" value="ECO:0007669"/>
    <property type="project" value="UniProtKB-UniRule"/>
</dbReference>
<dbReference type="GO" id="GO:0051301">
    <property type="term" value="P:cell division"/>
    <property type="evidence" value="ECO:0007669"/>
    <property type="project" value="UniProtKB-KW"/>
</dbReference>
<dbReference type="GO" id="GO:0071555">
    <property type="term" value="P:cell wall organization"/>
    <property type="evidence" value="ECO:0007669"/>
    <property type="project" value="UniProtKB-KW"/>
</dbReference>
<dbReference type="GO" id="GO:0009252">
    <property type="term" value="P:peptidoglycan biosynthetic process"/>
    <property type="evidence" value="ECO:0007669"/>
    <property type="project" value="UniProtKB-UniRule"/>
</dbReference>
<dbReference type="GO" id="GO:0008360">
    <property type="term" value="P:regulation of cell shape"/>
    <property type="evidence" value="ECO:0007669"/>
    <property type="project" value="UniProtKB-KW"/>
</dbReference>
<dbReference type="Gene3D" id="3.90.190.20">
    <property type="entry name" value="Mur ligase, C-terminal domain"/>
    <property type="match status" value="1"/>
</dbReference>
<dbReference type="Gene3D" id="3.40.1190.10">
    <property type="entry name" value="Mur-like, catalytic domain"/>
    <property type="match status" value="1"/>
</dbReference>
<dbReference type="Gene3D" id="3.40.50.720">
    <property type="entry name" value="NAD(P)-binding Rossmann-like Domain"/>
    <property type="match status" value="1"/>
</dbReference>
<dbReference type="HAMAP" id="MF_00046">
    <property type="entry name" value="MurC"/>
    <property type="match status" value="1"/>
</dbReference>
<dbReference type="InterPro" id="IPR036565">
    <property type="entry name" value="Mur-like_cat_sf"/>
</dbReference>
<dbReference type="InterPro" id="IPR004101">
    <property type="entry name" value="Mur_ligase_C"/>
</dbReference>
<dbReference type="InterPro" id="IPR036615">
    <property type="entry name" value="Mur_ligase_C_dom_sf"/>
</dbReference>
<dbReference type="InterPro" id="IPR013221">
    <property type="entry name" value="Mur_ligase_cen"/>
</dbReference>
<dbReference type="InterPro" id="IPR000713">
    <property type="entry name" value="Mur_ligase_N"/>
</dbReference>
<dbReference type="InterPro" id="IPR050061">
    <property type="entry name" value="MurCDEF_pg_biosynth"/>
</dbReference>
<dbReference type="InterPro" id="IPR005758">
    <property type="entry name" value="UDP-N-AcMur_Ala_ligase_MurC"/>
</dbReference>
<dbReference type="NCBIfam" id="TIGR01082">
    <property type="entry name" value="murC"/>
    <property type="match status" value="1"/>
</dbReference>
<dbReference type="PANTHER" id="PTHR43445:SF3">
    <property type="entry name" value="UDP-N-ACETYLMURAMATE--L-ALANINE LIGASE"/>
    <property type="match status" value="1"/>
</dbReference>
<dbReference type="PANTHER" id="PTHR43445">
    <property type="entry name" value="UDP-N-ACETYLMURAMATE--L-ALANINE LIGASE-RELATED"/>
    <property type="match status" value="1"/>
</dbReference>
<dbReference type="Pfam" id="PF01225">
    <property type="entry name" value="Mur_ligase"/>
    <property type="match status" value="1"/>
</dbReference>
<dbReference type="Pfam" id="PF02875">
    <property type="entry name" value="Mur_ligase_C"/>
    <property type="match status" value="1"/>
</dbReference>
<dbReference type="Pfam" id="PF08245">
    <property type="entry name" value="Mur_ligase_M"/>
    <property type="match status" value="1"/>
</dbReference>
<dbReference type="SUPFAM" id="SSF51984">
    <property type="entry name" value="MurCD N-terminal domain"/>
    <property type="match status" value="1"/>
</dbReference>
<dbReference type="SUPFAM" id="SSF53623">
    <property type="entry name" value="MurD-like peptide ligases, catalytic domain"/>
    <property type="match status" value="1"/>
</dbReference>
<dbReference type="SUPFAM" id="SSF53244">
    <property type="entry name" value="MurD-like peptide ligases, peptide-binding domain"/>
    <property type="match status" value="1"/>
</dbReference>
<sequence length="488" mass="50719">MTAEQLPPELQRVHMVGIGGAGMAGIARILLDRGGLVSGSDAKESRGVHALRARGALIRIGHDASALDLLPGGVTSVITTHAAIPKTNPELVEARRRGVPVMLRPVVLAKLMDGRITVMVTGTHGKTTTTSMAIVALQHCGRDPSFAVGGELGEAGTNAHHGSGDYFVAEADESDGSLLEYTPHVAVVTNIEADHLDFYGSTEAYVGVFDAFVERLAPGGALVVCADDPGSAALAERSAELGIRVLRYGSAGHAGAALAATLVSWEQRGTGAVAQIQLAGEADPRSMRLSVPGRHMALNVLGALLAAIEVGAPVGEVLDGLAGFEGVRRRFELVGTAESVRVFDDYAHHPTEVRATLEAVRSVVRQSGSGRLLVVFQPHLYSRTKAFAAEFGSALDAADEVFVLDVYAAREQPLTGISGASVAEHVTVPVRYLRDFSAVAEVVAAAAGPGDVVVTMGAGDVTLLGPEIVAALRMRADRSEPGRPGVLQ</sequence>
<comment type="function">
    <text evidence="1">Cell wall formation.</text>
</comment>
<comment type="catalytic activity">
    <reaction evidence="1">
        <text>UDP-N-acetyl-alpha-D-muramate + L-alanine + ATP = UDP-N-acetyl-alpha-D-muramoyl-L-alanine + ADP + phosphate + H(+)</text>
        <dbReference type="Rhea" id="RHEA:23372"/>
        <dbReference type="ChEBI" id="CHEBI:15378"/>
        <dbReference type="ChEBI" id="CHEBI:30616"/>
        <dbReference type="ChEBI" id="CHEBI:43474"/>
        <dbReference type="ChEBI" id="CHEBI:57972"/>
        <dbReference type="ChEBI" id="CHEBI:70757"/>
        <dbReference type="ChEBI" id="CHEBI:83898"/>
        <dbReference type="ChEBI" id="CHEBI:456216"/>
        <dbReference type="EC" id="6.3.2.8"/>
    </reaction>
</comment>
<comment type="pathway">
    <text evidence="1">Cell wall biogenesis; peptidoglycan biosynthesis.</text>
</comment>
<comment type="subcellular location">
    <subcellularLocation>
        <location evidence="1">Cytoplasm</location>
    </subcellularLocation>
</comment>
<comment type="similarity">
    <text evidence="1">Belongs to the MurCDEF family.</text>
</comment>
<protein>
    <recommendedName>
        <fullName evidence="1">UDP-N-acetylmuramate--L-alanine ligase</fullName>
        <ecNumber evidence="1">6.3.2.8</ecNumber>
    </recommendedName>
    <alternativeName>
        <fullName evidence="1">UDP-N-acetylmuramoyl-L-alanine synthetase</fullName>
    </alternativeName>
</protein>
<proteinExistence type="inferred from homology"/>
<evidence type="ECO:0000255" key="1">
    <source>
        <dbReference type="HAMAP-Rule" id="MF_00046"/>
    </source>
</evidence>
<keyword id="KW-0067">ATP-binding</keyword>
<keyword id="KW-0131">Cell cycle</keyword>
<keyword id="KW-0132">Cell division</keyword>
<keyword id="KW-0133">Cell shape</keyword>
<keyword id="KW-0961">Cell wall biogenesis/degradation</keyword>
<keyword id="KW-0963">Cytoplasm</keyword>
<keyword id="KW-0436">Ligase</keyword>
<keyword id="KW-0547">Nucleotide-binding</keyword>
<keyword id="KW-0573">Peptidoglycan synthesis</keyword>
<organism>
    <name type="scientific">Mycobacterium ulcerans (strain Agy99)</name>
    <dbReference type="NCBI Taxonomy" id="362242"/>
    <lineage>
        <taxon>Bacteria</taxon>
        <taxon>Bacillati</taxon>
        <taxon>Actinomycetota</taxon>
        <taxon>Actinomycetes</taxon>
        <taxon>Mycobacteriales</taxon>
        <taxon>Mycobacteriaceae</taxon>
        <taxon>Mycobacterium</taxon>
        <taxon>Mycobacterium ulcerans group</taxon>
    </lineage>
</organism>
<accession>A0PTI6</accession>
<feature type="chain" id="PRO_1000004377" description="UDP-N-acetylmuramate--L-alanine ligase">
    <location>
        <begin position="1"/>
        <end position="488"/>
    </location>
</feature>
<feature type="binding site" evidence="1">
    <location>
        <begin position="122"/>
        <end position="128"/>
    </location>
    <ligand>
        <name>ATP</name>
        <dbReference type="ChEBI" id="CHEBI:30616"/>
    </ligand>
</feature>
<gene>
    <name evidence="1" type="primary">murC</name>
    <name type="ordered locus">MUL_3500</name>
</gene>